<evidence type="ECO:0000250" key="1">
    <source>
        <dbReference type="UniProtKB" id="O55242"/>
    </source>
</evidence>
<evidence type="ECO:0000250" key="2">
    <source>
        <dbReference type="UniProtKB" id="Q5BJF2"/>
    </source>
</evidence>
<evidence type="ECO:0000250" key="3">
    <source>
        <dbReference type="UniProtKB" id="Q60492"/>
    </source>
</evidence>
<evidence type="ECO:0000250" key="4">
    <source>
        <dbReference type="UniProtKB" id="Q99720"/>
    </source>
</evidence>
<evidence type="ECO:0000250" key="5">
    <source>
        <dbReference type="UniProtKB" id="Q9R0C9"/>
    </source>
</evidence>
<evidence type="ECO:0000305" key="6"/>
<sequence length="223" mass="25145">MQWALGRRWVWAALLLAAAAVLTQVVWLWLGTQSFVFQHEEIAQLARQYAGLDHELAFSRLIVELRRLHPGHVLPDEELQWVFVNAGGWMGAMCLLHASLSEYVLLFGTALGSRGHSGRYWAEISDTIISGTFHQWREGTTKSEVFYPGETVVHGPGEATAVEWGPNTWMVEYGRGVIPSTLAFALADTIFSTQDFLTLFYTLRAYARGLRLEFTTYLFGQDS</sequence>
<dbReference type="EMBL" id="AY823410">
    <property type="protein sequence ID" value="AAV71153.1"/>
    <property type="molecule type" value="mRNA"/>
</dbReference>
<dbReference type="SMR" id="Q5PXE3"/>
<dbReference type="GO" id="GO:0070161">
    <property type="term" value="C:anchoring junction"/>
    <property type="evidence" value="ECO:0007669"/>
    <property type="project" value="UniProtKB-SubCell"/>
</dbReference>
<dbReference type="GO" id="GO:0031410">
    <property type="term" value="C:cytoplasmic vesicle"/>
    <property type="evidence" value="ECO:0007669"/>
    <property type="project" value="UniProtKB-KW"/>
</dbReference>
<dbReference type="GO" id="GO:0005789">
    <property type="term" value="C:endoplasmic reticulum membrane"/>
    <property type="evidence" value="ECO:0007669"/>
    <property type="project" value="UniProtKB-SubCell"/>
</dbReference>
<dbReference type="GO" id="GO:0030426">
    <property type="term" value="C:growth cone"/>
    <property type="evidence" value="ECO:0007669"/>
    <property type="project" value="UniProtKB-SubCell"/>
</dbReference>
<dbReference type="GO" id="GO:0005811">
    <property type="term" value="C:lipid droplet"/>
    <property type="evidence" value="ECO:0007669"/>
    <property type="project" value="UniProtKB-SubCell"/>
</dbReference>
<dbReference type="GO" id="GO:0016020">
    <property type="term" value="C:membrane"/>
    <property type="evidence" value="ECO:0000250"/>
    <property type="project" value="UniProtKB"/>
</dbReference>
<dbReference type="GO" id="GO:0005637">
    <property type="term" value="C:nuclear inner membrane"/>
    <property type="evidence" value="ECO:0007669"/>
    <property type="project" value="UniProtKB-SubCell"/>
</dbReference>
<dbReference type="GO" id="GO:0005640">
    <property type="term" value="C:nuclear outer membrane"/>
    <property type="evidence" value="ECO:0007669"/>
    <property type="project" value="UniProtKB-SubCell"/>
</dbReference>
<dbReference type="GO" id="GO:0014069">
    <property type="term" value="C:postsynaptic density"/>
    <property type="evidence" value="ECO:0000250"/>
    <property type="project" value="UniProtKB"/>
</dbReference>
<dbReference type="GO" id="GO:0098839">
    <property type="term" value="C:postsynaptic density membrane"/>
    <property type="evidence" value="ECO:0007669"/>
    <property type="project" value="UniProtKB-SubCell"/>
</dbReference>
<dbReference type="GO" id="GO:0006869">
    <property type="term" value="P:lipid transport"/>
    <property type="evidence" value="ECO:0007669"/>
    <property type="project" value="UniProtKB-KW"/>
</dbReference>
<dbReference type="GO" id="GO:0043523">
    <property type="term" value="P:regulation of neuron apoptotic process"/>
    <property type="evidence" value="ECO:0000250"/>
    <property type="project" value="UniProtKB"/>
</dbReference>
<dbReference type="InterPro" id="IPR006716">
    <property type="entry name" value="ERG2_sigma1_rcpt-like"/>
</dbReference>
<dbReference type="PANTHER" id="PTHR10868">
    <property type="entry name" value="SIGMA 1-TYPE OPIOID RECEPTOR-RELATED"/>
    <property type="match status" value="1"/>
</dbReference>
<dbReference type="PANTHER" id="PTHR10868:SF1">
    <property type="entry name" value="SIGMA NON-OPIOID INTRACELLULAR RECEPTOR 1"/>
    <property type="match status" value="1"/>
</dbReference>
<dbReference type="Pfam" id="PF04622">
    <property type="entry name" value="ERG2_Sigma1R"/>
    <property type="match status" value="1"/>
</dbReference>
<gene>
    <name type="primary">SIGMAR1</name>
    <name type="synonym">OPRS1</name>
</gene>
<organism>
    <name type="scientific">Mustela erminea</name>
    <name type="common">Ermine</name>
    <dbReference type="NCBI Taxonomy" id="36723"/>
    <lineage>
        <taxon>Eukaryota</taxon>
        <taxon>Metazoa</taxon>
        <taxon>Chordata</taxon>
        <taxon>Craniata</taxon>
        <taxon>Vertebrata</taxon>
        <taxon>Euteleostomi</taxon>
        <taxon>Mammalia</taxon>
        <taxon>Eutheria</taxon>
        <taxon>Laurasiatheria</taxon>
        <taxon>Carnivora</taxon>
        <taxon>Caniformia</taxon>
        <taxon>Musteloidea</taxon>
        <taxon>Mustelidae</taxon>
        <taxon>Mustelinae</taxon>
        <taxon>Mustela</taxon>
    </lineage>
</organism>
<reference key="1">
    <citation type="submission" date="2004-11" db="EMBL/GenBank/DDBJ databases">
        <title>Full-length Mustela erminea sigma-1 receptor cDNA.</title>
        <authorList>
            <person name="Hopkins B."/>
            <person name="Ravindran S."/>
        </authorList>
    </citation>
    <scope>NUCLEOTIDE SEQUENCE [MRNA]</scope>
</reference>
<protein>
    <recommendedName>
        <fullName>Sigma non-opioid intracellular receptor 1</fullName>
    </recommendedName>
    <alternativeName>
        <fullName>Sigma 1-type opioid receptor</fullName>
        <shortName>Sigma1-receptor</shortName>
        <shortName>Sigma1R</shortName>
    </alternativeName>
</protein>
<comment type="function">
    <text evidence="1 4">Functions in lipid transport from the endoplasmic reticulum and is involved in a wide array of cellular functions probably through regulation of the biogenesis of lipid microdomains at the plasma membrane. Involved in the regulation of different receptors it plays a role in BDNF signaling and EGF signaling. Also regulates ion channels like the potassium channel and could modulate neurotransmitter release. Plays a role in calcium signaling through modulation together with ANK2 of the ITP3R-dependent calcium efflux at the endoplasmic reticulum. Plays a role in several other cell functions including proliferation, survival and death. Originally identified for its ability to bind various psychoactive drugs it is involved in learning processes, memory and mood alteration (By similarity). Necessary for proper mitochondrial axonal transport in motor neurons, in particular the retrograde movement of mitochondria. Plays a role in protecting cells against oxidative stress-induced cell death via its interaction with RNF112 (By similarity).</text>
</comment>
<comment type="subunit">
    <text evidence="1 4 5">Homotrimer. Forms a ternary complex with ANK2 and ITPR3. The complex is disrupted by agonists. Interacts with KCNA4. Interacts with KCNA2; cocaine consumption leads to increased interaction. Interacts with RNF112 in an oxidative stress-regulated manner.</text>
</comment>
<comment type="subcellular location">
    <subcellularLocation>
        <location evidence="4">Nucleus inner membrane</location>
    </subcellularLocation>
    <subcellularLocation>
        <location evidence="4">Nucleus outer membrane</location>
    </subcellularLocation>
    <subcellularLocation>
        <location evidence="4">Nucleus envelope</location>
    </subcellularLocation>
    <subcellularLocation>
        <location evidence="4">Cytoplasmic vesicle</location>
    </subcellularLocation>
    <subcellularLocation>
        <location evidence="4">Endoplasmic reticulum membrane</location>
    </subcellularLocation>
    <subcellularLocation>
        <location evidence="4">Membrane</location>
        <topology evidence="4">Single-pass membrane protein</topology>
    </subcellularLocation>
    <subcellularLocation>
        <location evidence="1">Lipid droplet</location>
    </subcellularLocation>
    <subcellularLocation>
        <location evidence="4">Cell junction</location>
    </subcellularLocation>
    <subcellularLocation>
        <location evidence="4">Cell membrane</location>
    </subcellularLocation>
    <subcellularLocation>
        <location evidence="4">Cell projection</location>
        <location evidence="4">Growth cone</location>
    </subcellularLocation>
    <subcellularLocation>
        <location evidence="4">Postsynaptic density membrane</location>
    </subcellularLocation>
    <text evidence="1 4">During interphase, detected at the inner and outer nuclear membrane and the endoplasmic reticulum. Detected on cytoplasmic vesicles during mitosis. Targeted to lipid droplets, cholesterol and galactosylceramide-enriched domains of the endoplasmic reticulum (By similarity). Enriched at cell-cell communication regions, growth cone and postsynaptic structures. Localization is modulated by ligand-binding. In motor neurons it is enriched at cholinergic postsynaptic densities (By similarity).</text>
</comment>
<comment type="domain">
    <text evidence="4">The C-terminal helices form a flat, hydrophobic surface that is probably tightly associated with the cytosolic surface of the endoplasmic reticulum membrane.</text>
</comment>
<comment type="miscellaneous">
    <text evidence="2">Sigma receptors are classified into two subtypes (Sigma-1 and Sigma-2) based on their different pharmacological profile.</text>
</comment>
<comment type="similarity">
    <text evidence="6">Belongs to the ERG2 family.</text>
</comment>
<feature type="chain" id="PRO_0000268654" description="Sigma non-opioid intracellular receptor 1">
    <location>
        <begin position="1"/>
        <end position="223"/>
    </location>
</feature>
<feature type="topological domain" description="Lumenal" evidence="4">
    <location>
        <begin position="1"/>
        <end position="9"/>
    </location>
</feature>
<feature type="transmembrane region" description="Helical" evidence="4">
    <location>
        <begin position="10"/>
        <end position="30"/>
    </location>
</feature>
<feature type="topological domain" description="Cytoplasmic" evidence="4">
    <location>
        <begin position="31"/>
        <end position="223"/>
    </location>
</feature>
<feature type="region of interest" description="Targeting to endoplasmic reticulum-associated lipid droplets" evidence="1">
    <location>
        <begin position="2"/>
        <end position="8"/>
    </location>
</feature>
<feature type="region of interest" description="Important for ligand-binding" evidence="3">
    <location>
        <begin position="99"/>
        <end position="106"/>
    </location>
</feature>
<feature type="region of interest" description="C-terminal hydrophobic region" evidence="6">
    <location>
        <begin position="177"/>
        <end position="223"/>
    </location>
</feature>
<feature type="site" description="Important for ligand binding" evidence="4">
    <location>
        <position position="126"/>
    </location>
</feature>
<feature type="site" description="Important for ligand binding" evidence="4">
    <location>
        <position position="172"/>
    </location>
</feature>
<proteinExistence type="evidence at transcript level"/>
<accession>Q5PXE3</accession>
<name>SGMR1_MUSER</name>
<keyword id="KW-0965">Cell junction</keyword>
<keyword id="KW-1003">Cell membrane</keyword>
<keyword id="KW-0966">Cell projection</keyword>
<keyword id="KW-0968">Cytoplasmic vesicle</keyword>
<keyword id="KW-0256">Endoplasmic reticulum</keyword>
<keyword id="KW-0551">Lipid droplet</keyword>
<keyword id="KW-0445">Lipid transport</keyword>
<keyword id="KW-0472">Membrane</keyword>
<keyword id="KW-0539">Nucleus</keyword>
<keyword id="KW-0628">Postsynaptic cell membrane</keyword>
<keyword id="KW-0675">Receptor</keyword>
<keyword id="KW-0770">Synapse</keyword>
<keyword id="KW-0812">Transmembrane</keyword>
<keyword id="KW-1133">Transmembrane helix</keyword>
<keyword id="KW-0813">Transport</keyword>